<evidence type="ECO:0000255" key="1">
    <source>
        <dbReference type="HAMAP-Rule" id="MF_00688"/>
    </source>
</evidence>
<protein>
    <recommendedName>
        <fullName evidence="1">Leucyl/phenylalanyl-tRNA--protein transferase</fullName>
        <ecNumber evidence="1">2.3.2.6</ecNumber>
    </recommendedName>
    <alternativeName>
        <fullName evidence="1">L/F-transferase</fullName>
    </alternativeName>
    <alternativeName>
        <fullName evidence="1">Leucyltransferase</fullName>
    </alternativeName>
    <alternativeName>
        <fullName evidence="1">Phenyalanyltransferase</fullName>
    </alternativeName>
</protein>
<gene>
    <name evidence="1" type="primary">aat</name>
    <name type="ordered locus">Desal_1831</name>
</gene>
<keyword id="KW-0012">Acyltransferase</keyword>
<keyword id="KW-0963">Cytoplasm</keyword>
<keyword id="KW-1185">Reference proteome</keyword>
<keyword id="KW-0808">Transferase</keyword>
<feature type="chain" id="PRO_1000212565" description="Leucyl/phenylalanyl-tRNA--protein transferase">
    <location>
        <begin position="1"/>
        <end position="240"/>
    </location>
</feature>
<name>LFTR_MARSD</name>
<reference key="1">
    <citation type="submission" date="2009-06" db="EMBL/GenBank/DDBJ databases">
        <title>Complete sequence of Desulfovibrio salexigens DSM 2638.</title>
        <authorList>
            <consortium name="US DOE Joint Genome Institute"/>
            <person name="Lucas S."/>
            <person name="Copeland A."/>
            <person name="Lapidus A."/>
            <person name="Glavina del Rio T."/>
            <person name="Tice H."/>
            <person name="Bruce D."/>
            <person name="Goodwin L."/>
            <person name="Pitluck S."/>
            <person name="Munk A.C."/>
            <person name="Brettin T."/>
            <person name="Detter J.C."/>
            <person name="Han C."/>
            <person name="Tapia R."/>
            <person name="Larimer F."/>
            <person name="Land M."/>
            <person name="Hauser L."/>
            <person name="Kyrpides N."/>
            <person name="Anderson I."/>
            <person name="Wall J.D."/>
            <person name="Arkin A.P."/>
            <person name="Dehal P."/>
            <person name="Chivian D."/>
            <person name="Giles B."/>
            <person name="Hazen T.C."/>
        </authorList>
    </citation>
    <scope>NUCLEOTIDE SEQUENCE [LARGE SCALE GENOMIC DNA]</scope>
    <source>
        <strain>ATCC 14822 / DSM 2638 / NCIMB 8403 / VKM B-1763</strain>
    </source>
</reference>
<proteinExistence type="inferred from homology"/>
<dbReference type="EC" id="2.3.2.6" evidence="1"/>
<dbReference type="EMBL" id="CP001649">
    <property type="protein sequence ID" value="ACS79893.1"/>
    <property type="molecule type" value="Genomic_DNA"/>
</dbReference>
<dbReference type="RefSeq" id="WP_015851709.1">
    <property type="nucleotide sequence ID" value="NC_012881.1"/>
</dbReference>
<dbReference type="SMR" id="C6BTW3"/>
<dbReference type="STRING" id="526222.Desal_1831"/>
<dbReference type="KEGG" id="dsa:Desal_1831"/>
<dbReference type="eggNOG" id="COG2360">
    <property type="taxonomic scope" value="Bacteria"/>
</dbReference>
<dbReference type="HOGENOM" id="CLU_075045_0_0_7"/>
<dbReference type="OrthoDB" id="9790282at2"/>
<dbReference type="Proteomes" id="UP000002601">
    <property type="component" value="Chromosome"/>
</dbReference>
<dbReference type="GO" id="GO:0005737">
    <property type="term" value="C:cytoplasm"/>
    <property type="evidence" value="ECO:0007669"/>
    <property type="project" value="UniProtKB-SubCell"/>
</dbReference>
<dbReference type="GO" id="GO:0008914">
    <property type="term" value="F:leucyl-tRNA--protein transferase activity"/>
    <property type="evidence" value="ECO:0007669"/>
    <property type="project" value="UniProtKB-UniRule"/>
</dbReference>
<dbReference type="GO" id="GO:0030163">
    <property type="term" value="P:protein catabolic process"/>
    <property type="evidence" value="ECO:0007669"/>
    <property type="project" value="UniProtKB-UniRule"/>
</dbReference>
<dbReference type="FunFam" id="3.30.70.3550:FF:000001">
    <property type="entry name" value="Leucyl/phenylalanyl-tRNA--protein transferase"/>
    <property type="match status" value="1"/>
</dbReference>
<dbReference type="Gene3D" id="3.40.630.70">
    <property type="entry name" value="Leucyl/phenylalanyl-tRNA-protein transferase, C-terminal domain"/>
    <property type="match status" value="1"/>
</dbReference>
<dbReference type="Gene3D" id="3.30.70.3550">
    <property type="entry name" value="Leucyl/phenylalanyl-tRNA-protein transferase, N-terminal domain"/>
    <property type="match status" value="1"/>
</dbReference>
<dbReference type="HAMAP" id="MF_00688">
    <property type="entry name" value="Leu_Phe_trans"/>
    <property type="match status" value="1"/>
</dbReference>
<dbReference type="InterPro" id="IPR016181">
    <property type="entry name" value="Acyl_CoA_acyltransferase"/>
</dbReference>
<dbReference type="InterPro" id="IPR004616">
    <property type="entry name" value="Leu/Phe-tRNA_Trfase"/>
</dbReference>
<dbReference type="InterPro" id="IPR042203">
    <property type="entry name" value="Leu/Phe-tRNA_Trfase_C"/>
</dbReference>
<dbReference type="InterPro" id="IPR042221">
    <property type="entry name" value="Leu/Phe-tRNA_Trfase_N"/>
</dbReference>
<dbReference type="NCBIfam" id="TIGR00667">
    <property type="entry name" value="aat"/>
    <property type="match status" value="1"/>
</dbReference>
<dbReference type="PANTHER" id="PTHR30098">
    <property type="entry name" value="LEUCYL/PHENYLALANYL-TRNA--PROTEIN TRANSFERASE"/>
    <property type="match status" value="1"/>
</dbReference>
<dbReference type="PANTHER" id="PTHR30098:SF2">
    <property type="entry name" value="LEUCYL_PHENYLALANYL-TRNA--PROTEIN TRANSFERASE"/>
    <property type="match status" value="1"/>
</dbReference>
<dbReference type="Pfam" id="PF03588">
    <property type="entry name" value="Leu_Phe_trans"/>
    <property type="match status" value="1"/>
</dbReference>
<dbReference type="SUPFAM" id="SSF55729">
    <property type="entry name" value="Acyl-CoA N-acyltransferases (Nat)"/>
    <property type="match status" value="1"/>
</dbReference>
<organism>
    <name type="scientific">Maridesulfovibrio salexigens (strain ATCC 14822 / DSM 2638 / NCIMB 8403 / VKM B-1763)</name>
    <name type="common">Desulfovibrio salexigens</name>
    <dbReference type="NCBI Taxonomy" id="526222"/>
    <lineage>
        <taxon>Bacteria</taxon>
        <taxon>Pseudomonadati</taxon>
        <taxon>Thermodesulfobacteriota</taxon>
        <taxon>Desulfovibrionia</taxon>
        <taxon>Desulfovibrionales</taxon>
        <taxon>Desulfovibrionaceae</taxon>
        <taxon>Maridesulfovibrio</taxon>
    </lineage>
</organism>
<sequence>MVVYRLIEDPIFPHPDEAEPDGLLAVGGDLSPERLLSAYASGIFPWYDERSPILWWSLDPRLILNFDKLHVSRRVKRKVRKREYTVTFDRAFESVIANCARKFRPGQAGTWILPEMIEAYVKLHKLGFVHSVEVWNREGNLAGGLYGVSLGKVFSGESMFFLEPDASKVGFSYLVQWLKNREFHFVDCQQPTDHLKSLGAEEVSRELFLDMLDEALEHPALRGTWEFMEGEYEMITEVLS</sequence>
<comment type="function">
    <text evidence="1">Functions in the N-end rule pathway of protein degradation where it conjugates Leu, Phe and, less efficiently, Met from aminoacyl-tRNAs to the N-termini of proteins containing an N-terminal arginine or lysine.</text>
</comment>
<comment type="catalytic activity">
    <reaction evidence="1">
        <text>N-terminal L-lysyl-[protein] + L-leucyl-tRNA(Leu) = N-terminal L-leucyl-L-lysyl-[protein] + tRNA(Leu) + H(+)</text>
        <dbReference type="Rhea" id="RHEA:12340"/>
        <dbReference type="Rhea" id="RHEA-COMP:9613"/>
        <dbReference type="Rhea" id="RHEA-COMP:9622"/>
        <dbReference type="Rhea" id="RHEA-COMP:12670"/>
        <dbReference type="Rhea" id="RHEA-COMP:12671"/>
        <dbReference type="ChEBI" id="CHEBI:15378"/>
        <dbReference type="ChEBI" id="CHEBI:65249"/>
        <dbReference type="ChEBI" id="CHEBI:78442"/>
        <dbReference type="ChEBI" id="CHEBI:78494"/>
        <dbReference type="ChEBI" id="CHEBI:133043"/>
        <dbReference type="EC" id="2.3.2.6"/>
    </reaction>
</comment>
<comment type="catalytic activity">
    <reaction evidence="1">
        <text>N-terminal L-arginyl-[protein] + L-leucyl-tRNA(Leu) = N-terminal L-leucyl-L-arginyl-[protein] + tRNA(Leu) + H(+)</text>
        <dbReference type="Rhea" id="RHEA:50416"/>
        <dbReference type="Rhea" id="RHEA-COMP:9613"/>
        <dbReference type="Rhea" id="RHEA-COMP:9622"/>
        <dbReference type="Rhea" id="RHEA-COMP:12672"/>
        <dbReference type="Rhea" id="RHEA-COMP:12673"/>
        <dbReference type="ChEBI" id="CHEBI:15378"/>
        <dbReference type="ChEBI" id="CHEBI:64719"/>
        <dbReference type="ChEBI" id="CHEBI:78442"/>
        <dbReference type="ChEBI" id="CHEBI:78494"/>
        <dbReference type="ChEBI" id="CHEBI:133044"/>
        <dbReference type="EC" id="2.3.2.6"/>
    </reaction>
</comment>
<comment type="catalytic activity">
    <reaction evidence="1">
        <text>L-phenylalanyl-tRNA(Phe) + an N-terminal L-alpha-aminoacyl-[protein] = an N-terminal L-phenylalanyl-L-alpha-aminoacyl-[protein] + tRNA(Phe)</text>
        <dbReference type="Rhea" id="RHEA:43632"/>
        <dbReference type="Rhea" id="RHEA-COMP:9668"/>
        <dbReference type="Rhea" id="RHEA-COMP:9699"/>
        <dbReference type="Rhea" id="RHEA-COMP:10636"/>
        <dbReference type="Rhea" id="RHEA-COMP:10637"/>
        <dbReference type="ChEBI" id="CHEBI:78442"/>
        <dbReference type="ChEBI" id="CHEBI:78531"/>
        <dbReference type="ChEBI" id="CHEBI:78597"/>
        <dbReference type="ChEBI" id="CHEBI:83561"/>
        <dbReference type="EC" id="2.3.2.6"/>
    </reaction>
</comment>
<comment type="subcellular location">
    <subcellularLocation>
        <location evidence="1">Cytoplasm</location>
    </subcellularLocation>
</comment>
<comment type="similarity">
    <text evidence="1">Belongs to the L/F-transferase family.</text>
</comment>
<accession>C6BTW3</accession>